<sequence length="208" mass="23420">MGLMHRVLLLATFALLCMHAKAAGFDHDKVPRTVERGGGARQLRTATMSDDEARVSKLPSFIESFVKNRKIESWIQNKVTDDFVLSELKLVRLPGTSLADDPNFKLFQKFKIGGWLEEKATTTKAWENLGLDSLPFDQVSKIDEFKTYTQYVTVLNKKASKLDIDQWHGLLSGGSPEELMAKAMILRTLGRDVLERRVMLGGHVVVPF</sequence>
<keyword id="KW-1035">Host cytoplasm</keyword>
<keyword id="KW-1048">Host nucleus</keyword>
<keyword id="KW-1185">Reference proteome</keyword>
<keyword id="KW-0677">Repeat</keyword>
<keyword id="KW-0964">Secreted</keyword>
<keyword id="KW-0732">Signal</keyword>
<keyword id="KW-0843">Virulence</keyword>
<comment type="function">
    <text evidence="2 4 5 7 8">Secreted effector that acts as an elicitor of hypersensitive response (HR) specifically on plants carrying defense protein R1, through its interaction with this protein (PubMed:12000683, PubMed:25760731, PubMed:29910515). Also acts as a virulence factor that promotes colonization and suppresses cell death induced by CRN2 as well as callose deposition, a hallmark of basal defense (PubMed:26336092, PubMed:30329083). Interacts with host exocyst component Sec5 and thereby disturbs vesicle trafficking, a cellular process that is important for basal defense. By targeting and stabilizing Sec5 in the cytoplasm, the exocyst complex is thus out of balance and not able to mediate the focal secretion of PR-1 and callose (PubMed:26336092).</text>
</comment>
<comment type="subunit">
    <text evidence="5">Interacts with host exocyst component Sec5.</text>
</comment>
<comment type="subcellular location">
    <subcellularLocation>
        <location evidence="4 8">Secreted</location>
    </subcellularLocation>
    <subcellularLocation>
        <location evidence="4 8">Host cytoplasm</location>
    </subcellularLocation>
    <subcellularLocation>
        <location evidence="4 8">Host nucleus</location>
    </subcellularLocation>
    <subcellularLocation>
        <location evidence="8">Host peroxisome</location>
    </subcellularLocation>
    <text evidence="4 8">Nuclear-localized Avr1 triggers the R1-mediated HR, whereas cytoplasmic localization is required for suppression of CRN2-induced cell death (PubMed:25760731). Also localized at Sec5-associated subcellular bodies (PubMed:30329083).</text>
</comment>
<comment type="induction">
    <text evidence="3 6">Expression is induced during host plant infection.</text>
</comment>
<comment type="domain">
    <text evidence="13">The RxLR-dEER motif acts to carry the protein into the host cell cytoplasm through binding to cell surface phosphatidylinositol-3-phosphate.</text>
</comment>
<comment type="domain">
    <text evidence="5 7">The C-terminal domain of Avr1 comprises three motifs (W1, W2, and Y), two linker regions (ln1 and ln2), and at the very end the T-region. The T-region of AVR1 is important but not sufficient to trigger R1-mediated HR and W1, W2 and Y are equally important for recognition by R1.</text>
</comment>
<comment type="similarity">
    <text evidence="11">Belongs to the RxLR effector family.</text>
</comment>
<reference key="1">
    <citation type="journal article" date="2009" name="Nature">
        <title>Genome sequence and analysis of the Irish potato famine pathogen Phytophthora infestans.</title>
        <authorList>
            <consortium name="The Broad Institute Genome Sequencing Platform"/>
            <person name="Haas B.J."/>
            <person name="Kamoun S."/>
            <person name="Zody M.C."/>
            <person name="Jiang R.H."/>
            <person name="Handsaker R.E."/>
            <person name="Cano L.M."/>
            <person name="Grabherr M."/>
            <person name="Kodira C.D."/>
            <person name="Raffaele S."/>
            <person name="Torto-Alalibo T."/>
            <person name="Bozkurt T.O."/>
            <person name="Ah-Fong A.M."/>
            <person name="Alvarado L."/>
            <person name="Anderson V.L."/>
            <person name="Armstrong M.R."/>
            <person name="Avrova A."/>
            <person name="Baxter L."/>
            <person name="Beynon J."/>
            <person name="Boevink P.C."/>
            <person name="Bollmann S.R."/>
            <person name="Bos J.I."/>
            <person name="Bulone V."/>
            <person name="Cai G."/>
            <person name="Cakir C."/>
            <person name="Carrington J.C."/>
            <person name="Chawner M."/>
            <person name="Conti L."/>
            <person name="Costanzo S."/>
            <person name="Ewan R."/>
            <person name="Fahlgren N."/>
            <person name="Fischbach M.A."/>
            <person name="Fugelstad J."/>
            <person name="Gilroy E.M."/>
            <person name="Gnerre S."/>
            <person name="Green P.J."/>
            <person name="Grenville-Briggs L.J."/>
            <person name="Griffith J."/>
            <person name="Grunwald N.J."/>
            <person name="Horn K."/>
            <person name="Horner N.R."/>
            <person name="Hu C.H."/>
            <person name="Huitema E."/>
            <person name="Jeong D.H."/>
            <person name="Jones A.M."/>
            <person name="Jones J.D."/>
            <person name="Jones R.W."/>
            <person name="Karlsson E.K."/>
            <person name="Kunjeti S.G."/>
            <person name="Lamour K."/>
            <person name="Liu Z."/>
            <person name="Ma L."/>
            <person name="Maclean D."/>
            <person name="Chibucos M.C."/>
            <person name="McDonald H."/>
            <person name="McWalters J."/>
            <person name="Meijer H.J."/>
            <person name="Morgan W."/>
            <person name="Morris P.F."/>
            <person name="Munro C.A."/>
            <person name="O'Neill K."/>
            <person name="Ospina-Giraldo M."/>
            <person name="Pinzon A."/>
            <person name="Pritchard L."/>
            <person name="Ramsahoye B."/>
            <person name="Ren Q."/>
            <person name="Restrepo S."/>
            <person name="Roy S."/>
            <person name="Sadanandom A."/>
            <person name="Savidor A."/>
            <person name="Schornack S."/>
            <person name="Schwartz D.C."/>
            <person name="Schumann U.D."/>
            <person name="Schwessinger B."/>
            <person name="Seyer L."/>
            <person name="Sharpe T."/>
            <person name="Silvar C."/>
            <person name="Song J."/>
            <person name="Studholme D.J."/>
            <person name="Sykes S."/>
            <person name="Thines M."/>
            <person name="van de Vondervoort P.J."/>
            <person name="Phuntumart V."/>
            <person name="Wawra S."/>
            <person name="Weide R."/>
            <person name="Win J."/>
            <person name="Young C."/>
            <person name="Zhou S."/>
            <person name="Fry W."/>
            <person name="Meyers B.C."/>
            <person name="van West P."/>
            <person name="Ristaino J."/>
            <person name="Govers F."/>
            <person name="Birch P.R."/>
            <person name="Whisson S.C."/>
            <person name="Judelson H.S."/>
            <person name="Nusbaum C."/>
        </authorList>
    </citation>
    <scope>NUCLEOTIDE SEQUENCE [LARGE SCALE GENOMIC DNA]</scope>
    <scope>INDUCTION</scope>
    <source>
        <strain>T30-4</strain>
    </source>
</reference>
<reference key="2">
    <citation type="journal article" date="2002" name="Plant J.">
        <title>The R1 gene for potato resistance to late blight (Phytophthora infestans) belongs to the leucine zipper/NBS/LRR class of plant resistance genes.</title>
        <authorList>
            <person name="Ballvora A."/>
            <person name="Ercolano M.R."/>
            <person name="Weiss J."/>
            <person name="Meksem K."/>
            <person name="Bormann C.A."/>
            <person name="Oberhagemann P."/>
            <person name="Salamini F."/>
            <person name="Gebhardt C."/>
        </authorList>
    </citation>
    <scope>FUNCTION</scope>
</reference>
<reference key="3">
    <citation type="journal article" date="2015" name="New Phytol.">
        <title>Immune activation mediated by the late blight resistance protein R1 requires nuclear localization of R1 and the effector AVR1.</title>
        <authorList>
            <person name="Du Y."/>
            <person name="Berg J."/>
            <person name="Govers F."/>
            <person name="Bouwmeester K."/>
        </authorList>
    </citation>
    <scope>SUBCELLULAR LOCATION</scope>
    <scope>FUNCTION</scope>
</reference>
<reference key="4">
    <citation type="journal article" date="2015" name="Plant Physiol.">
        <title>Phytophthora infestans RXLR effector AVR1 interacts with exocyst component Sec5 to manipulate plant immunity.</title>
        <authorList>
            <person name="Du Y."/>
            <person name="Mpina M.H."/>
            <person name="Birch P.R."/>
            <person name="Bouwmeester K."/>
            <person name="Govers F."/>
        </authorList>
    </citation>
    <scope>FUNCTION</scope>
    <scope>DOMAIN</scope>
    <scope>INTERACTION WITH HOST SEC5</scope>
    <scope>MUTAGENESIS OF 171-LEU--PHE-208</scope>
</reference>
<reference key="5">
    <citation type="journal article" date="2017" name="Front. Plant Sci.">
        <title>Conserved RXLR effector genes of Phytophthora infestans expressed at the early stage of potato infection are suppressive to host defense.</title>
        <authorList>
            <person name="Yin J."/>
            <person name="Gu B."/>
            <person name="Huang G."/>
            <person name="Tian Y."/>
            <person name="Quan J."/>
            <person name="Lindqvist-Kreuze H."/>
            <person name="Shan W."/>
        </authorList>
    </citation>
    <scope>INDUCTION</scope>
</reference>
<reference key="6">
    <citation type="journal article" date="2018" name="Stud. Mycol.">
        <title>RXLR effector diversity in Phytophthora infestans isolates determines recognition by potato resistance proteins; the case study AVR1 and R1.</title>
        <authorList>
            <person name="Du Y."/>
            <person name="Weide R."/>
            <person name="Zhao Z."/>
            <person name="Msimuko P."/>
            <person name="Govers F."/>
            <person name="Bouwmeester K."/>
        </authorList>
    </citation>
    <scope>FUNCTION</scope>
    <scope>DOMAIN</scope>
    <scope>MUTAGENESIS OF 70-LYS--ARG-92; 111-LYS--PHE-136; 137-ASP--LYS-157 AND 158-LYS--LEU-170</scope>
</reference>
<reference key="7">
    <citation type="journal article" date="2019" name="J. Exp. Bot.">
        <title>Phytophthora infestans RXLR effectors act in concert at diverse subcellular locations to enhance host colonization.</title>
        <authorList>
            <person name="Wang S."/>
            <person name="McLellan H."/>
            <person name="Bukharova T."/>
            <person name="He Q."/>
            <person name="Murphy F."/>
            <person name="Shi J."/>
            <person name="Sun S."/>
            <person name="van Weymers P."/>
            <person name="Ren Y."/>
            <person name="Thilliez G."/>
            <person name="Wang H."/>
            <person name="Chen X."/>
            <person name="Engelhardt S."/>
            <person name="Vleeshouwers V."/>
            <person name="Gilroy E.M."/>
            <person name="Whisson S.C."/>
            <person name="Hein I."/>
            <person name="Wang X."/>
            <person name="Tian Z."/>
            <person name="Birch P.R.J."/>
            <person name="Boevink P.C."/>
        </authorList>
    </citation>
    <scope>SUBCELLULAR LOCATION</scope>
    <scope>FUNCTION</scope>
</reference>
<accession>D0NVB5</accession>
<protein>
    <recommendedName>
        <fullName evidence="10">RxLR effector protein Avr1</fullName>
    </recommendedName>
    <alternativeName>
        <fullName evidence="9">Avirulence protein 1</fullName>
    </alternativeName>
</protein>
<gene>
    <name evidence="9" type="primary">Avr1</name>
    <name type="ORF">PITG_16663</name>
</gene>
<organism>
    <name type="scientific">Phytophthora infestans (strain T30-4)</name>
    <name type="common">Potato late blight agent</name>
    <dbReference type="NCBI Taxonomy" id="403677"/>
    <lineage>
        <taxon>Eukaryota</taxon>
        <taxon>Sar</taxon>
        <taxon>Stramenopiles</taxon>
        <taxon>Oomycota</taxon>
        <taxon>Peronosporales</taxon>
        <taxon>Peronosporaceae</taxon>
        <taxon>Phytophthora</taxon>
    </lineage>
</organism>
<feature type="signal peptide" evidence="1">
    <location>
        <begin position="1"/>
        <end position="22"/>
    </location>
</feature>
<feature type="chain" id="PRO_5003013687" description="RxLR effector protein Avr1">
    <location>
        <begin position="23"/>
        <end position="208"/>
    </location>
</feature>
<feature type="region of interest" description="W1-motif" evidence="12">
    <location>
        <begin position="70"/>
        <end position="92"/>
    </location>
</feature>
<feature type="region of interest" description="Linker region ln1" evidence="12">
    <location>
        <begin position="93"/>
        <end position="110"/>
    </location>
</feature>
<feature type="region of interest" description="W2-motif" evidence="12">
    <location>
        <begin position="111"/>
        <end position="136"/>
    </location>
</feature>
<feature type="region of interest" description="Y-motif" evidence="12">
    <location>
        <begin position="137"/>
        <end position="157"/>
    </location>
</feature>
<feature type="region of interest" description="Linker region ln2" evidence="12">
    <location>
        <begin position="158"/>
        <end position="170"/>
    </location>
</feature>
<feature type="region of interest" description="T-region" evidence="12">
    <location>
        <begin position="170"/>
        <end position="208"/>
    </location>
</feature>
<feature type="short sequence motif" description="RxLR-dEER" evidence="13">
    <location>
        <begin position="41"/>
        <end position="54"/>
    </location>
</feature>
<feature type="mutagenesis site" description="Does not abolish the recognition of Avr1 by host R1." evidence="7">
    <location>
        <begin position="70"/>
        <end position="92"/>
    </location>
</feature>
<feature type="mutagenesis site" description="Abolishes the recognition of Avr1 by host R1." evidence="7">
    <location>
        <begin position="111"/>
        <end position="136"/>
    </location>
</feature>
<feature type="mutagenesis site" description="Abolishes the recognition of Avr1 by host R1." evidence="7">
    <location>
        <begin position="137"/>
        <end position="157"/>
    </location>
</feature>
<feature type="mutagenesis site" description="Abolishes the recognition of Avr1 by host R1." evidence="7">
    <location>
        <begin position="158"/>
        <end position="170"/>
    </location>
</feature>
<feature type="mutagenesis site" description="Loses the virulence function, but also the ability to suppress CRN2-induced cell death and to interact with Sec5." evidence="5">
    <location>
        <begin position="170"/>
        <end position="208"/>
    </location>
</feature>
<name>AVR1_PHYIT</name>
<dbReference type="EMBL" id="DS028168">
    <property type="protein sequence ID" value="EEY66592.1"/>
    <property type="molecule type" value="Genomic_DNA"/>
</dbReference>
<dbReference type="RefSeq" id="XP_002896893.1">
    <property type="nucleotide sequence ID" value="XM_002896847.1"/>
</dbReference>
<dbReference type="SMR" id="D0NVB5"/>
<dbReference type="STRING" id="403677.D0NVB5"/>
<dbReference type="EnsemblProtists" id="PITG_16663T0">
    <property type="protein sequence ID" value="PITG_16663T0"/>
    <property type="gene ID" value="PITG_16663"/>
</dbReference>
<dbReference type="GeneID" id="9465293"/>
<dbReference type="KEGG" id="pif:PITG_16663"/>
<dbReference type="VEuPathDB" id="FungiDB:PITG_16663"/>
<dbReference type="eggNOG" id="ENOG502RGGT">
    <property type="taxonomic scope" value="Eukaryota"/>
</dbReference>
<dbReference type="HOGENOM" id="CLU_1323178_0_0_1"/>
<dbReference type="InParanoid" id="D0NVB5"/>
<dbReference type="OMA" id="WDDIDIA"/>
<dbReference type="OrthoDB" id="92956at2759"/>
<dbReference type="PHI-base" id="PHI:10632"/>
<dbReference type="PHI-base" id="PHI:5113"/>
<dbReference type="Proteomes" id="UP000006643">
    <property type="component" value="Partially assembled WGS sequence"/>
</dbReference>
<dbReference type="GO" id="GO:0005576">
    <property type="term" value="C:extracellular region"/>
    <property type="evidence" value="ECO:0007669"/>
    <property type="project" value="UniProtKB-SubCell"/>
</dbReference>
<dbReference type="GO" id="GO:0042025">
    <property type="term" value="C:host cell nucleus"/>
    <property type="evidence" value="ECO:0007669"/>
    <property type="project" value="UniProtKB-SubCell"/>
</dbReference>
<dbReference type="GO" id="GO:0120149">
    <property type="term" value="C:host cell peroxisome"/>
    <property type="evidence" value="ECO:0007669"/>
    <property type="project" value="UniProtKB-SubCell"/>
</dbReference>
<dbReference type="GO" id="GO:1990215">
    <property type="term" value="P:symbiont-mediated perturbation of host vesicle-mediated transport"/>
    <property type="evidence" value="ECO:0000269"/>
    <property type="project" value="SigSci"/>
</dbReference>
<evidence type="ECO:0000255" key="1"/>
<evidence type="ECO:0000269" key="2">
    <source>
    </source>
</evidence>
<evidence type="ECO:0000269" key="3">
    <source>
    </source>
</evidence>
<evidence type="ECO:0000269" key="4">
    <source>
    </source>
</evidence>
<evidence type="ECO:0000269" key="5">
    <source>
    </source>
</evidence>
<evidence type="ECO:0000269" key="6">
    <source>
    </source>
</evidence>
<evidence type="ECO:0000269" key="7">
    <source>
    </source>
</evidence>
<evidence type="ECO:0000269" key="8">
    <source>
    </source>
</evidence>
<evidence type="ECO:0000303" key="9">
    <source>
    </source>
</evidence>
<evidence type="ECO:0000303" key="10">
    <source>
    </source>
</evidence>
<evidence type="ECO:0000305" key="11"/>
<evidence type="ECO:0000305" key="12">
    <source>
    </source>
</evidence>
<evidence type="ECO:0000305" key="13">
    <source>
    </source>
</evidence>
<proteinExistence type="evidence at protein level"/>